<reference key="1">
    <citation type="journal article" date="2009" name="Appl. Environ. Microbiol.">
        <title>Novel features of the polysaccharide-digesting gliding bacterium Flavobacterium johnsoniae as revealed by genome sequence analysis.</title>
        <authorList>
            <person name="McBride M.J."/>
            <person name="Xie G."/>
            <person name="Martens E.C."/>
            <person name="Lapidus A."/>
            <person name="Henrissat B."/>
            <person name="Rhodes R.G."/>
            <person name="Goltsman E."/>
            <person name="Wang W."/>
            <person name="Xu J."/>
            <person name="Hunnicutt D.W."/>
            <person name="Staroscik A.M."/>
            <person name="Hoover T.R."/>
            <person name="Cheng Y.Q."/>
            <person name="Stein J.L."/>
        </authorList>
    </citation>
    <scope>NUCLEOTIDE SEQUENCE [LARGE SCALE GENOMIC DNA]</scope>
    <source>
        <strain>ATCC 17061 / DSM 2064 / JCM 8514 / BCRC 14874 / CCUG 350202 / NBRC 14942 / NCIMB 11054 / UW101</strain>
    </source>
</reference>
<comment type="function">
    <text evidence="1">F(1)F(0) ATP synthase produces ATP from ADP in the presence of a proton or sodium gradient. F-type ATPases consist of two structural domains, F(1) containing the extramembraneous catalytic core and F(0) containing the membrane proton channel, linked together by a central stalk and a peripheral stalk. During catalysis, ATP synthesis in the catalytic domain of F(1) is coupled via a rotary mechanism of the central stalk subunits to proton translocation.</text>
</comment>
<comment type="function">
    <text evidence="1">Component of the F(0) channel, it forms part of the peripheral stalk, linking F(1) to F(0).</text>
</comment>
<comment type="subunit">
    <text evidence="1">F-type ATPases have 2 components, F(1) - the catalytic core - and F(0) - the membrane proton channel. F(1) has five subunits: alpha(3), beta(3), gamma(1), delta(1), epsilon(1). F(0) has three main subunits: a(1), b(2) and c(10-14). The alpha and beta chains form an alternating ring which encloses part of the gamma chain. F(1) is attached to F(0) by a central stalk formed by the gamma and epsilon chains, while a peripheral stalk is formed by the delta and b chains.</text>
</comment>
<comment type="subcellular location">
    <subcellularLocation>
        <location evidence="1">Cell inner membrane</location>
        <topology evidence="1">Single-pass membrane protein</topology>
    </subcellularLocation>
</comment>
<comment type="similarity">
    <text evidence="1">Belongs to the ATPase B chain family.</text>
</comment>
<name>ATPF_FLAJ1</name>
<organism>
    <name type="scientific">Flavobacterium johnsoniae (strain ATCC 17061 / DSM 2064 / JCM 8514 / BCRC 14874 / CCUG 350202 / NBRC 14942 / NCIMB 11054 / UW101)</name>
    <name type="common">Cytophaga johnsonae</name>
    <dbReference type="NCBI Taxonomy" id="376686"/>
    <lineage>
        <taxon>Bacteria</taxon>
        <taxon>Pseudomonadati</taxon>
        <taxon>Bacteroidota</taxon>
        <taxon>Flavobacteriia</taxon>
        <taxon>Flavobacteriales</taxon>
        <taxon>Flavobacteriaceae</taxon>
        <taxon>Flavobacterium</taxon>
    </lineage>
</organism>
<keyword id="KW-0066">ATP synthesis</keyword>
<keyword id="KW-0997">Cell inner membrane</keyword>
<keyword id="KW-1003">Cell membrane</keyword>
<keyword id="KW-0138">CF(0)</keyword>
<keyword id="KW-0375">Hydrogen ion transport</keyword>
<keyword id="KW-0406">Ion transport</keyword>
<keyword id="KW-0472">Membrane</keyword>
<keyword id="KW-0812">Transmembrane</keyword>
<keyword id="KW-1133">Transmembrane helix</keyword>
<keyword id="KW-0813">Transport</keyword>
<feature type="chain" id="PRO_0000368485" description="ATP synthase subunit b">
    <location>
        <begin position="1"/>
        <end position="166"/>
    </location>
</feature>
<feature type="transmembrane region" description="Helical" evidence="1">
    <location>
        <begin position="8"/>
        <end position="28"/>
    </location>
</feature>
<evidence type="ECO:0000255" key="1">
    <source>
        <dbReference type="HAMAP-Rule" id="MF_01398"/>
    </source>
</evidence>
<sequence length="166" mass="18799">MDKLINDFSFGLFFWQALILVILILLLVKFAWKPIMESITAREEGIKNALLSAENAKREMENLQADNQRILNEARAERDAMLKEAREMKEKMIADSKNEAQEAGQKMIEQAKAAIESEKNAAMAELKSQVSTLSLSIAEKLLKEELSNKESQTKLVEKMLGDVKLN</sequence>
<gene>
    <name evidence="1" type="primary">atpF</name>
    <name type="ordered locus">Fjoh_1057</name>
</gene>
<accession>A5FL32</accession>
<dbReference type="EMBL" id="CP000685">
    <property type="protein sequence ID" value="ABQ04090.1"/>
    <property type="molecule type" value="Genomic_DNA"/>
</dbReference>
<dbReference type="RefSeq" id="WP_012023142.1">
    <property type="nucleotide sequence ID" value="NC_009441.1"/>
</dbReference>
<dbReference type="SMR" id="A5FL32"/>
<dbReference type="STRING" id="376686.Fjoh_1057"/>
<dbReference type="KEGG" id="fjo:Fjoh_1057"/>
<dbReference type="eggNOG" id="COG0711">
    <property type="taxonomic scope" value="Bacteria"/>
</dbReference>
<dbReference type="HOGENOM" id="CLU_079215_4_1_10"/>
<dbReference type="OrthoDB" id="9795289at2"/>
<dbReference type="Proteomes" id="UP000006694">
    <property type="component" value="Chromosome"/>
</dbReference>
<dbReference type="GO" id="GO:0005886">
    <property type="term" value="C:plasma membrane"/>
    <property type="evidence" value="ECO:0007669"/>
    <property type="project" value="UniProtKB-SubCell"/>
</dbReference>
<dbReference type="GO" id="GO:0045259">
    <property type="term" value="C:proton-transporting ATP synthase complex"/>
    <property type="evidence" value="ECO:0007669"/>
    <property type="project" value="UniProtKB-KW"/>
</dbReference>
<dbReference type="GO" id="GO:0046933">
    <property type="term" value="F:proton-transporting ATP synthase activity, rotational mechanism"/>
    <property type="evidence" value="ECO:0007669"/>
    <property type="project" value="UniProtKB-UniRule"/>
</dbReference>
<dbReference type="GO" id="GO:0046961">
    <property type="term" value="F:proton-transporting ATPase activity, rotational mechanism"/>
    <property type="evidence" value="ECO:0007669"/>
    <property type="project" value="TreeGrafter"/>
</dbReference>
<dbReference type="CDD" id="cd06503">
    <property type="entry name" value="ATP-synt_Fo_b"/>
    <property type="match status" value="1"/>
</dbReference>
<dbReference type="Gene3D" id="1.20.5.620">
    <property type="entry name" value="F1F0 ATP synthase subunit B, membrane domain"/>
    <property type="match status" value="1"/>
</dbReference>
<dbReference type="HAMAP" id="MF_01398">
    <property type="entry name" value="ATP_synth_b_bprime"/>
    <property type="match status" value="1"/>
</dbReference>
<dbReference type="InterPro" id="IPR028987">
    <property type="entry name" value="ATP_synth_B-like_membr_sf"/>
</dbReference>
<dbReference type="InterPro" id="IPR002146">
    <property type="entry name" value="ATP_synth_b/b'su_bac/chlpt"/>
</dbReference>
<dbReference type="InterPro" id="IPR005864">
    <property type="entry name" value="ATP_synth_F0_bsu_bac"/>
</dbReference>
<dbReference type="InterPro" id="IPR050059">
    <property type="entry name" value="ATP_synthase_B_chain"/>
</dbReference>
<dbReference type="NCBIfam" id="TIGR01144">
    <property type="entry name" value="ATP_synt_b"/>
    <property type="match status" value="1"/>
</dbReference>
<dbReference type="NCBIfam" id="NF011041">
    <property type="entry name" value="PRK14471.1"/>
    <property type="match status" value="1"/>
</dbReference>
<dbReference type="PANTHER" id="PTHR33445:SF1">
    <property type="entry name" value="ATP SYNTHASE SUBUNIT B"/>
    <property type="match status" value="1"/>
</dbReference>
<dbReference type="PANTHER" id="PTHR33445">
    <property type="entry name" value="ATP SYNTHASE SUBUNIT B', CHLOROPLASTIC"/>
    <property type="match status" value="1"/>
</dbReference>
<dbReference type="Pfam" id="PF00430">
    <property type="entry name" value="ATP-synt_B"/>
    <property type="match status" value="1"/>
</dbReference>
<dbReference type="SUPFAM" id="SSF81573">
    <property type="entry name" value="F1F0 ATP synthase subunit B, membrane domain"/>
    <property type="match status" value="1"/>
</dbReference>
<proteinExistence type="inferred from homology"/>
<protein>
    <recommendedName>
        <fullName evidence="1">ATP synthase subunit b</fullName>
    </recommendedName>
    <alternativeName>
        <fullName evidence="1">ATP synthase F(0) sector subunit b</fullName>
    </alternativeName>
    <alternativeName>
        <fullName evidence="1">ATPase subunit I</fullName>
    </alternativeName>
    <alternativeName>
        <fullName evidence="1">F-type ATPase subunit b</fullName>
        <shortName evidence="1">F-ATPase subunit b</shortName>
    </alternativeName>
</protein>